<evidence type="ECO:0000250" key="1">
    <source>
        <dbReference type="UniProtKB" id="Q9C004"/>
    </source>
</evidence>
<evidence type="ECO:0000255" key="2">
    <source>
        <dbReference type="PROSITE-ProRule" id="PRU00572"/>
    </source>
</evidence>
<evidence type="ECO:0000256" key="3">
    <source>
        <dbReference type="SAM" id="MobiDB-lite"/>
    </source>
</evidence>
<evidence type="ECO:0000269" key="4">
    <source>
    </source>
</evidence>
<evidence type="ECO:0000269" key="5">
    <source>
    </source>
</evidence>
<evidence type="ECO:0000269" key="6">
    <source>
    </source>
</evidence>
<evidence type="ECO:0000305" key="7"/>
<protein>
    <recommendedName>
        <fullName>Protein sprouty homolog 4</fullName>
        <shortName>Spry-4</shortName>
    </recommendedName>
</protein>
<reference key="1">
    <citation type="journal article" date="1999" name="Mech. Dev.">
        <title>Cloning and expression pattern of a mouse homologue of Drosophila sprouty in the mouse embryo.</title>
        <authorList>
            <person name="de Maximy A.A."/>
            <person name="Nakatake Y."/>
            <person name="Moncada S."/>
            <person name="Itoh N."/>
            <person name="Thiery J.P."/>
            <person name="Bellusci S."/>
        </authorList>
    </citation>
    <scope>NUCLEOTIDE SEQUENCE [MRNA]</scope>
    <scope>DEVELOPMENTAL STAGE</scope>
</reference>
<reference key="2">
    <citation type="journal article" date="1999" name="Development">
        <title>Vertebrate sprouty genes are induced by FGF signaling and can cause chondrodysplasia when overexpressed.</title>
        <authorList>
            <person name="Minowada G."/>
            <person name="Jarvis L.A."/>
            <person name="Chi C.L."/>
            <person name="Neubueser A."/>
            <person name="Sun X."/>
            <person name="Hacohen N."/>
            <person name="Krasnow M.A."/>
            <person name="Martin G.R."/>
        </authorList>
    </citation>
    <scope>NUCLEOTIDE SEQUENCE [MRNA]</scope>
</reference>
<reference key="3">
    <citation type="journal article" date="2005" name="Science">
        <title>The transcriptional landscape of the mammalian genome.</title>
        <authorList>
            <person name="Carninci P."/>
            <person name="Kasukawa T."/>
            <person name="Katayama S."/>
            <person name="Gough J."/>
            <person name="Frith M.C."/>
            <person name="Maeda N."/>
            <person name="Oyama R."/>
            <person name="Ravasi T."/>
            <person name="Lenhard B."/>
            <person name="Wells C."/>
            <person name="Kodzius R."/>
            <person name="Shimokawa K."/>
            <person name="Bajic V.B."/>
            <person name="Brenner S.E."/>
            <person name="Batalov S."/>
            <person name="Forrest A.R."/>
            <person name="Zavolan M."/>
            <person name="Davis M.J."/>
            <person name="Wilming L.G."/>
            <person name="Aidinis V."/>
            <person name="Allen J.E."/>
            <person name="Ambesi-Impiombato A."/>
            <person name="Apweiler R."/>
            <person name="Aturaliya R.N."/>
            <person name="Bailey T.L."/>
            <person name="Bansal M."/>
            <person name="Baxter L."/>
            <person name="Beisel K.W."/>
            <person name="Bersano T."/>
            <person name="Bono H."/>
            <person name="Chalk A.M."/>
            <person name="Chiu K.P."/>
            <person name="Choudhary V."/>
            <person name="Christoffels A."/>
            <person name="Clutterbuck D.R."/>
            <person name="Crowe M.L."/>
            <person name="Dalla E."/>
            <person name="Dalrymple B.P."/>
            <person name="de Bono B."/>
            <person name="Della Gatta G."/>
            <person name="di Bernardo D."/>
            <person name="Down T."/>
            <person name="Engstrom P."/>
            <person name="Fagiolini M."/>
            <person name="Faulkner G."/>
            <person name="Fletcher C.F."/>
            <person name="Fukushima T."/>
            <person name="Furuno M."/>
            <person name="Futaki S."/>
            <person name="Gariboldi M."/>
            <person name="Georgii-Hemming P."/>
            <person name="Gingeras T.R."/>
            <person name="Gojobori T."/>
            <person name="Green R.E."/>
            <person name="Gustincich S."/>
            <person name="Harbers M."/>
            <person name="Hayashi Y."/>
            <person name="Hensch T.K."/>
            <person name="Hirokawa N."/>
            <person name="Hill D."/>
            <person name="Huminiecki L."/>
            <person name="Iacono M."/>
            <person name="Ikeo K."/>
            <person name="Iwama A."/>
            <person name="Ishikawa T."/>
            <person name="Jakt M."/>
            <person name="Kanapin A."/>
            <person name="Katoh M."/>
            <person name="Kawasawa Y."/>
            <person name="Kelso J."/>
            <person name="Kitamura H."/>
            <person name="Kitano H."/>
            <person name="Kollias G."/>
            <person name="Krishnan S.P."/>
            <person name="Kruger A."/>
            <person name="Kummerfeld S.K."/>
            <person name="Kurochkin I.V."/>
            <person name="Lareau L.F."/>
            <person name="Lazarevic D."/>
            <person name="Lipovich L."/>
            <person name="Liu J."/>
            <person name="Liuni S."/>
            <person name="McWilliam S."/>
            <person name="Madan Babu M."/>
            <person name="Madera M."/>
            <person name="Marchionni L."/>
            <person name="Matsuda H."/>
            <person name="Matsuzawa S."/>
            <person name="Miki H."/>
            <person name="Mignone F."/>
            <person name="Miyake S."/>
            <person name="Morris K."/>
            <person name="Mottagui-Tabar S."/>
            <person name="Mulder N."/>
            <person name="Nakano N."/>
            <person name="Nakauchi H."/>
            <person name="Ng P."/>
            <person name="Nilsson R."/>
            <person name="Nishiguchi S."/>
            <person name="Nishikawa S."/>
            <person name="Nori F."/>
            <person name="Ohara O."/>
            <person name="Okazaki Y."/>
            <person name="Orlando V."/>
            <person name="Pang K.C."/>
            <person name="Pavan W.J."/>
            <person name="Pavesi G."/>
            <person name="Pesole G."/>
            <person name="Petrovsky N."/>
            <person name="Piazza S."/>
            <person name="Reed J."/>
            <person name="Reid J.F."/>
            <person name="Ring B.Z."/>
            <person name="Ringwald M."/>
            <person name="Rost B."/>
            <person name="Ruan Y."/>
            <person name="Salzberg S.L."/>
            <person name="Sandelin A."/>
            <person name="Schneider C."/>
            <person name="Schoenbach C."/>
            <person name="Sekiguchi K."/>
            <person name="Semple C.A."/>
            <person name="Seno S."/>
            <person name="Sessa L."/>
            <person name="Sheng Y."/>
            <person name="Shibata Y."/>
            <person name="Shimada H."/>
            <person name="Shimada K."/>
            <person name="Silva D."/>
            <person name="Sinclair B."/>
            <person name="Sperling S."/>
            <person name="Stupka E."/>
            <person name="Sugiura K."/>
            <person name="Sultana R."/>
            <person name="Takenaka Y."/>
            <person name="Taki K."/>
            <person name="Tammoja K."/>
            <person name="Tan S.L."/>
            <person name="Tang S."/>
            <person name="Taylor M.S."/>
            <person name="Tegner J."/>
            <person name="Teichmann S.A."/>
            <person name="Ueda H.R."/>
            <person name="van Nimwegen E."/>
            <person name="Verardo R."/>
            <person name="Wei C.L."/>
            <person name="Yagi K."/>
            <person name="Yamanishi H."/>
            <person name="Zabarovsky E."/>
            <person name="Zhu S."/>
            <person name="Zimmer A."/>
            <person name="Hide W."/>
            <person name="Bult C."/>
            <person name="Grimmond S.M."/>
            <person name="Teasdale R.D."/>
            <person name="Liu E.T."/>
            <person name="Brusic V."/>
            <person name="Quackenbush J."/>
            <person name="Wahlestedt C."/>
            <person name="Mattick J.S."/>
            <person name="Hume D.A."/>
            <person name="Kai C."/>
            <person name="Sasaki D."/>
            <person name="Tomaru Y."/>
            <person name="Fukuda S."/>
            <person name="Kanamori-Katayama M."/>
            <person name="Suzuki M."/>
            <person name="Aoki J."/>
            <person name="Arakawa T."/>
            <person name="Iida J."/>
            <person name="Imamura K."/>
            <person name="Itoh M."/>
            <person name="Kato T."/>
            <person name="Kawaji H."/>
            <person name="Kawagashira N."/>
            <person name="Kawashima T."/>
            <person name="Kojima M."/>
            <person name="Kondo S."/>
            <person name="Konno H."/>
            <person name="Nakano K."/>
            <person name="Ninomiya N."/>
            <person name="Nishio T."/>
            <person name="Okada M."/>
            <person name="Plessy C."/>
            <person name="Shibata K."/>
            <person name="Shiraki T."/>
            <person name="Suzuki S."/>
            <person name="Tagami M."/>
            <person name="Waki K."/>
            <person name="Watahiki A."/>
            <person name="Okamura-Oho Y."/>
            <person name="Suzuki H."/>
            <person name="Kawai J."/>
            <person name="Hayashizaki Y."/>
        </authorList>
    </citation>
    <scope>NUCLEOTIDE SEQUENCE [LARGE SCALE MRNA]</scope>
    <source>
        <strain>C57BL/6J</strain>
        <tissue>Head</tissue>
        <tissue>Skin</tissue>
    </source>
</reference>
<reference key="4">
    <citation type="submission" date="2005-09" db="EMBL/GenBank/DDBJ databases">
        <authorList>
            <person name="Mural R.J."/>
            <person name="Adams M.D."/>
            <person name="Myers E.W."/>
            <person name="Smith H.O."/>
            <person name="Venter J.C."/>
        </authorList>
    </citation>
    <scope>NUCLEOTIDE SEQUENCE [LARGE SCALE GENOMIC DNA]</scope>
</reference>
<reference key="5">
    <citation type="journal article" date="2004" name="Genome Res.">
        <title>The status, quality, and expansion of the NIH full-length cDNA project: the Mammalian Gene Collection (MGC).</title>
        <authorList>
            <consortium name="The MGC Project Team"/>
        </authorList>
    </citation>
    <scope>NUCLEOTIDE SEQUENCE [LARGE SCALE MRNA]</scope>
    <source>
        <strain>C57BL/6J</strain>
        <tissue>Brain</tissue>
    </source>
</reference>
<reference key="6">
    <citation type="journal article" date="2006" name="J. Biol. Chem.">
        <title>A functional interaction between sprouty proteins and caveolin-1.</title>
        <authorList>
            <person name="Cabrita M.A."/>
            <person name="Jaeggi F."/>
            <person name="Widjaja S.P."/>
            <person name="Christofori G."/>
        </authorList>
    </citation>
    <scope>INTERACTION WITH CAV1</scope>
</reference>
<reference key="7">
    <citation type="journal article" date="2008" name="J. Biol. Chem.">
        <title>Tesk1 interacts with Spry2 to abrogate its inhibition of ERK phosphorylation downstream of receptor tyrosine kinase signaling.</title>
        <authorList>
            <person name="Chandramouli S."/>
            <person name="Yu C.Y."/>
            <person name="Yusoff P."/>
            <person name="Lao D.H."/>
            <person name="Leong H.F."/>
            <person name="Mizuno K."/>
            <person name="Guy G.R."/>
        </authorList>
    </citation>
    <scope>INTERACTION WITH TESK1</scope>
</reference>
<gene>
    <name type="primary">Spry4</name>
</gene>
<accession>Q9WTP2</accession>
<accession>Q543R1</accession>
<accession>Q9QXV7</accession>
<name>SPY4_MOUSE</name>
<feature type="chain" id="PRO_0000076906" description="Protein sprouty homolog 4">
    <location>
        <begin position="1"/>
        <end position="300"/>
    </location>
</feature>
<feature type="domain" description="SPR" evidence="2">
    <location>
        <begin position="167"/>
        <end position="274"/>
    </location>
</feature>
<feature type="region of interest" description="Disordered" evidence="3">
    <location>
        <begin position="1"/>
        <end position="28"/>
    </location>
</feature>
<feature type="region of interest" description="Disordered" evidence="3">
    <location>
        <begin position="52"/>
        <end position="114"/>
    </location>
</feature>
<feature type="compositionally biased region" description="Low complexity" evidence="3">
    <location>
        <begin position="7"/>
        <end position="21"/>
    </location>
</feature>
<feature type="compositionally biased region" description="Low complexity" evidence="3">
    <location>
        <begin position="92"/>
        <end position="108"/>
    </location>
</feature>
<feature type="modified residue" description="N-acetylmethionine" evidence="1">
    <location>
        <position position="1"/>
    </location>
</feature>
<feature type="modified residue" description="Phosphoserine" evidence="1">
    <location>
        <position position="126"/>
    </location>
</feature>
<feature type="sequence conflict" description="In Ref. 2; AAD56007." evidence="7" ref="2">
    <original>V</original>
    <variation>F</variation>
    <location>
        <position position="10"/>
    </location>
</feature>
<proteinExistence type="evidence at protein level"/>
<keyword id="KW-0007">Acetylation</keyword>
<keyword id="KW-1003">Cell membrane</keyword>
<keyword id="KW-0966">Cell projection</keyword>
<keyword id="KW-0963">Cytoplasm</keyword>
<keyword id="KW-0217">Developmental protein</keyword>
<keyword id="KW-0472">Membrane</keyword>
<keyword id="KW-0597">Phosphoprotein</keyword>
<keyword id="KW-1185">Reference proteome</keyword>
<organism>
    <name type="scientific">Mus musculus</name>
    <name type="common">Mouse</name>
    <dbReference type="NCBI Taxonomy" id="10090"/>
    <lineage>
        <taxon>Eukaryota</taxon>
        <taxon>Metazoa</taxon>
        <taxon>Chordata</taxon>
        <taxon>Craniata</taxon>
        <taxon>Vertebrata</taxon>
        <taxon>Euteleostomi</taxon>
        <taxon>Mammalia</taxon>
        <taxon>Eutheria</taxon>
        <taxon>Euarchontoglires</taxon>
        <taxon>Glires</taxon>
        <taxon>Rodentia</taxon>
        <taxon>Myomorpha</taxon>
        <taxon>Muroidea</taxon>
        <taxon>Muridae</taxon>
        <taxon>Murinae</taxon>
        <taxon>Mus</taxon>
        <taxon>Mus</taxon>
    </lineage>
</organism>
<comment type="function">
    <text evidence="1">Suppresses the insulin receptor and EGFR-transduced MAPK signaling pathway, but does not inhibit MAPK activation by a constitutively active mutant Ras. Probably impairs the formation of GTP-Ras (By similarity). Inhibits Ras-independent, but not Ras-dependent, activation of RAF1 (By similarity). Represses integrin-mediated cell spreading via inhibition of TESK1-mediated phosphorylation of cofilin (By similarity).</text>
</comment>
<comment type="subunit">
    <text evidence="1 5 6">Interacts (via C-terminus) with TESK1 (via both C- and N-termini); the interaction inhibits TESK1 kinase activity (PubMed:17974561). Interacts with RAF1 (By similarity). Interacts with CAV1 (via C-terminus) (PubMed:16877379).</text>
</comment>
<comment type="subcellular location">
    <subcellularLocation>
        <location evidence="1">Cytoplasm</location>
    </subcellularLocation>
    <subcellularLocation>
        <location evidence="7">Cell projection</location>
        <location evidence="7">Ruffle membrane</location>
        <topology evidence="7">Peripheral membrane protein</topology>
    </subcellularLocation>
    <text evidence="1">Found in the cytoplasm in unstimulated cells but is translocated to the membrane ruffles in cells stimulated with EGF (epidermal growth factor). Colocalizes with TESK1 in vesicular spots in the cytoplasm (By similarity).</text>
</comment>
<comment type="tissue specificity">
    <text>Expressed in the embryo and adult tissues including heart, brain, lung, kidney, and skeletal muscle.</text>
</comment>
<comment type="developmental stage">
    <text evidence="4">At 8 dpc expressed in the lateral plate mesoderm of the primitive streak. At 9.5 and 10.5 dpc expressed in the nasal placodes, maxillary and mandibular processes, posterior part of the hyoid arch and the progress zone of the limb buds and the presomitic mesoderm. At 11.5 dpc expressed in the dorso-lateral region of the somites (mostly in the myotome) and in the otic vesicle. At 11.5 and 12.5 dpc expressed in the distal lung mesenchyme, with a strong expression in the accessory lobe of the lung.</text>
</comment>
<comment type="induction">
    <text>By FGF signaling.</text>
</comment>
<comment type="domain">
    <text>The Cys-rich domain is responsible for the localization of the protein to the membrane ruffles.</text>
</comment>
<comment type="similarity">
    <text evidence="7">Belongs to the sprouty family.</text>
</comment>
<sequence>MEPPVPQSSVPVNPSSVMVQPLLDSRAPHSRLQHPLTILPIDQMKTSHVENDYIDNPSLAPATGPKRPRGGPPELAPTPARCDQDITHHWISFSGRPSSVSSSSSTSSDQRLLDHMAPPPVAEQASPRAVRLQPKVVHCKPLDLKGPTAPPELDKHFLLCEACGKCKCKECASPRTLPSCWVCNQECLCSAQTLVNYGTCMCLVQGIFYHCTNEDDEGSCADHPCSCSGSNCCARWSFMGALSVVLPCLLCYLPATGCVKLAQRGYDRLRRPGCRCKHTNSVICKAASGDTKTSRSDKPF</sequence>
<dbReference type="EMBL" id="AB019280">
    <property type="protein sequence ID" value="BAA77689.1"/>
    <property type="molecule type" value="mRNA"/>
</dbReference>
<dbReference type="EMBL" id="AF176906">
    <property type="protein sequence ID" value="AAD56007.1"/>
    <property type="molecule type" value="mRNA"/>
</dbReference>
<dbReference type="EMBL" id="AK037180">
    <property type="protein sequence ID" value="BAC29739.1"/>
    <property type="molecule type" value="mRNA"/>
</dbReference>
<dbReference type="EMBL" id="AK048122">
    <property type="protein sequence ID" value="BAC33249.1"/>
    <property type="molecule type" value="mRNA"/>
</dbReference>
<dbReference type="EMBL" id="CH466528">
    <property type="protein sequence ID" value="EDL10072.1"/>
    <property type="molecule type" value="Genomic_DNA"/>
</dbReference>
<dbReference type="EMBL" id="BC050944">
    <property type="protein sequence ID" value="AAH50944.1"/>
    <property type="molecule type" value="mRNA"/>
</dbReference>
<dbReference type="EMBL" id="BC057005">
    <property type="protein sequence ID" value="AAH57005.1"/>
    <property type="molecule type" value="mRNA"/>
</dbReference>
<dbReference type="CCDS" id="CCDS29202.1"/>
<dbReference type="RefSeq" id="NP_036028.2">
    <property type="nucleotide sequence ID" value="NM_011898.2"/>
</dbReference>
<dbReference type="RefSeq" id="XP_036017041.1">
    <property type="nucleotide sequence ID" value="XM_036161148.1"/>
</dbReference>
<dbReference type="BioGRID" id="204878">
    <property type="interactions" value="7"/>
</dbReference>
<dbReference type="FunCoup" id="Q9WTP2">
    <property type="interactions" value="773"/>
</dbReference>
<dbReference type="STRING" id="10090.ENSMUSP00000025295"/>
<dbReference type="GlyGen" id="Q9WTP2">
    <property type="glycosylation" value="2 sites"/>
</dbReference>
<dbReference type="iPTMnet" id="Q9WTP2"/>
<dbReference type="PhosphoSitePlus" id="Q9WTP2"/>
<dbReference type="SwissPalm" id="Q9WTP2"/>
<dbReference type="PaxDb" id="10090-ENSMUSP00000025295"/>
<dbReference type="PeptideAtlas" id="Q9WTP2"/>
<dbReference type="ProteomicsDB" id="261646"/>
<dbReference type="Antibodypedia" id="3761">
    <property type="antibodies" value="289 antibodies from 32 providers"/>
</dbReference>
<dbReference type="DNASU" id="24066"/>
<dbReference type="Ensembl" id="ENSMUST00000025295.8">
    <property type="protein sequence ID" value="ENSMUSP00000025295.7"/>
    <property type="gene ID" value="ENSMUSG00000024427.8"/>
</dbReference>
<dbReference type="GeneID" id="24066"/>
<dbReference type="KEGG" id="mmu:24066"/>
<dbReference type="UCSC" id="uc008esl.1">
    <property type="organism name" value="mouse"/>
</dbReference>
<dbReference type="AGR" id="MGI:1345144"/>
<dbReference type="CTD" id="81848"/>
<dbReference type="MGI" id="MGI:1345144">
    <property type="gene designation" value="Spry4"/>
</dbReference>
<dbReference type="VEuPathDB" id="HostDB:ENSMUSG00000024427"/>
<dbReference type="eggNOG" id="ENOG502QQ4V">
    <property type="taxonomic scope" value="Eukaryota"/>
</dbReference>
<dbReference type="GeneTree" id="ENSGT00950000183055"/>
<dbReference type="HOGENOM" id="CLU_077696_0_0_1"/>
<dbReference type="InParanoid" id="Q9WTP2"/>
<dbReference type="OMA" id="MCLVQGV"/>
<dbReference type="OrthoDB" id="10038884at2759"/>
<dbReference type="PhylomeDB" id="Q9WTP2"/>
<dbReference type="TreeFam" id="TF325070"/>
<dbReference type="BioGRID-ORCS" id="24066">
    <property type="hits" value="2 hits in 80 CRISPR screens"/>
</dbReference>
<dbReference type="ChiTaRS" id="Spry4">
    <property type="organism name" value="mouse"/>
</dbReference>
<dbReference type="PRO" id="PR:Q9WTP2"/>
<dbReference type="Proteomes" id="UP000000589">
    <property type="component" value="Chromosome 18"/>
</dbReference>
<dbReference type="RNAct" id="Q9WTP2">
    <property type="molecule type" value="protein"/>
</dbReference>
<dbReference type="Bgee" id="ENSMUSG00000024427">
    <property type="expression patterns" value="Expressed in secondary oocyte and 240 other cell types or tissues"/>
</dbReference>
<dbReference type="GO" id="GO:0005737">
    <property type="term" value="C:cytoplasm"/>
    <property type="evidence" value="ECO:0000250"/>
    <property type="project" value="UniProtKB"/>
</dbReference>
<dbReference type="GO" id="GO:0032587">
    <property type="term" value="C:ruffle membrane"/>
    <property type="evidence" value="ECO:0007669"/>
    <property type="project" value="UniProtKB-SubCell"/>
</dbReference>
<dbReference type="GO" id="GO:0004860">
    <property type="term" value="F:protein kinase inhibitor activity"/>
    <property type="evidence" value="ECO:0000250"/>
    <property type="project" value="UniProtKB"/>
</dbReference>
<dbReference type="GO" id="GO:1990830">
    <property type="term" value="P:cellular response to leukemia inhibitory factor"/>
    <property type="evidence" value="ECO:0000270"/>
    <property type="project" value="MGI"/>
</dbReference>
<dbReference type="GO" id="GO:1900025">
    <property type="term" value="P:negative regulation of substrate adhesion-dependent cell spreading"/>
    <property type="evidence" value="ECO:0000250"/>
    <property type="project" value="UniProtKB"/>
</dbReference>
<dbReference type="GO" id="GO:0009966">
    <property type="term" value="P:regulation of signal transduction"/>
    <property type="evidence" value="ECO:0007669"/>
    <property type="project" value="InterPro"/>
</dbReference>
<dbReference type="InterPro" id="IPR007875">
    <property type="entry name" value="Sprouty"/>
</dbReference>
<dbReference type="InterPro" id="IPR051192">
    <property type="entry name" value="Sprouty_domain"/>
</dbReference>
<dbReference type="PANTHER" id="PTHR12365:SF6">
    <property type="entry name" value="PROTEIN SPROUTY HOMOLOG 4"/>
    <property type="match status" value="1"/>
</dbReference>
<dbReference type="PANTHER" id="PTHR12365">
    <property type="entry name" value="SPROUTY"/>
    <property type="match status" value="1"/>
</dbReference>
<dbReference type="Pfam" id="PF05210">
    <property type="entry name" value="Sprouty"/>
    <property type="match status" value="1"/>
</dbReference>
<dbReference type="PROSITE" id="PS51227">
    <property type="entry name" value="SPR"/>
    <property type="match status" value="1"/>
</dbReference>